<sequence length="452" mass="49299">MKETIVAQATAPGRGGIGILRVSGPLATEVAQAILGKCPKPRMADYLPFKDADGTILDQGIALYFKSPNSFTGEDVLELQGHGGQVVLDLLLKRILQIDGIRLARPGEFSEQAFLNDKFDLAQAEAIADLIDATSEQAARSALKSLQGEFSKKVNELVDSVIYLRTYVEASIDFPDEEIDFLADGKIEANLRSIINQLEDVRAEAKQGSILREGMKVVIAGRPNAGKSSLLNALAGREAAIVTDIAGTTRDVLREHIHIDGMPLHIIDTAGLRDATDEVERIGISRAWTEIEQADRIILMLDSSDPESVDLSKVRSEFLAKLPSTLPVTIVRNKIDLNGEQASESEQSGYQMISLSAQTHDGVKLLREHLKQAMGFQTGMEGGFLARRRHLDALDKAAEHLQIGLVQLTEFHAGELLAEELRLVQSYLSEITGQFTSDDLLGNIFSSFCIGK</sequence>
<feature type="chain" id="PRO_1000048832" description="tRNA modification GTPase MnmE">
    <location>
        <begin position="1"/>
        <end position="452"/>
    </location>
</feature>
<feature type="domain" description="TrmE-type G">
    <location>
        <begin position="214"/>
        <end position="375"/>
    </location>
</feature>
<feature type="binding site" evidence="1">
    <location>
        <position position="21"/>
    </location>
    <ligand>
        <name>(6S)-5-formyl-5,6,7,8-tetrahydrofolate</name>
        <dbReference type="ChEBI" id="CHEBI:57457"/>
    </ligand>
</feature>
<feature type="binding site" evidence="1">
    <location>
        <position position="78"/>
    </location>
    <ligand>
        <name>(6S)-5-formyl-5,6,7,8-tetrahydrofolate</name>
        <dbReference type="ChEBI" id="CHEBI:57457"/>
    </ligand>
</feature>
<feature type="binding site" evidence="1">
    <location>
        <position position="118"/>
    </location>
    <ligand>
        <name>(6S)-5-formyl-5,6,7,8-tetrahydrofolate</name>
        <dbReference type="ChEBI" id="CHEBI:57457"/>
    </ligand>
</feature>
<feature type="binding site" evidence="1">
    <location>
        <begin position="224"/>
        <end position="229"/>
    </location>
    <ligand>
        <name>GTP</name>
        <dbReference type="ChEBI" id="CHEBI:37565"/>
    </ligand>
</feature>
<feature type="binding site" evidence="1">
    <location>
        <position position="224"/>
    </location>
    <ligand>
        <name>K(+)</name>
        <dbReference type="ChEBI" id="CHEBI:29103"/>
    </ligand>
</feature>
<feature type="binding site" evidence="1">
    <location>
        <position position="228"/>
    </location>
    <ligand>
        <name>Mg(2+)</name>
        <dbReference type="ChEBI" id="CHEBI:18420"/>
    </ligand>
</feature>
<feature type="binding site" evidence="1">
    <location>
        <begin position="243"/>
        <end position="249"/>
    </location>
    <ligand>
        <name>GTP</name>
        <dbReference type="ChEBI" id="CHEBI:37565"/>
    </ligand>
</feature>
<feature type="binding site" evidence="1">
    <location>
        <position position="243"/>
    </location>
    <ligand>
        <name>K(+)</name>
        <dbReference type="ChEBI" id="CHEBI:29103"/>
    </ligand>
</feature>
<feature type="binding site" evidence="1">
    <location>
        <position position="245"/>
    </location>
    <ligand>
        <name>K(+)</name>
        <dbReference type="ChEBI" id="CHEBI:29103"/>
    </ligand>
</feature>
<feature type="binding site" evidence="1">
    <location>
        <position position="248"/>
    </location>
    <ligand>
        <name>K(+)</name>
        <dbReference type="ChEBI" id="CHEBI:29103"/>
    </ligand>
</feature>
<feature type="binding site" evidence="1">
    <location>
        <position position="249"/>
    </location>
    <ligand>
        <name>Mg(2+)</name>
        <dbReference type="ChEBI" id="CHEBI:18420"/>
    </ligand>
</feature>
<feature type="binding site" evidence="1">
    <location>
        <begin position="268"/>
        <end position="271"/>
    </location>
    <ligand>
        <name>GTP</name>
        <dbReference type="ChEBI" id="CHEBI:37565"/>
    </ligand>
</feature>
<feature type="binding site" evidence="1">
    <location>
        <position position="452"/>
    </location>
    <ligand>
        <name>(6S)-5-formyl-5,6,7,8-tetrahydrofolate</name>
        <dbReference type="ChEBI" id="CHEBI:57457"/>
    </ligand>
</feature>
<organism>
    <name type="scientific">Haemophilus influenzae (strain PittGG)</name>
    <dbReference type="NCBI Taxonomy" id="374931"/>
    <lineage>
        <taxon>Bacteria</taxon>
        <taxon>Pseudomonadati</taxon>
        <taxon>Pseudomonadota</taxon>
        <taxon>Gammaproteobacteria</taxon>
        <taxon>Pasteurellales</taxon>
        <taxon>Pasteurellaceae</taxon>
        <taxon>Haemophilus</taxon>
    </lineage>
</organism>
<reference key="1">
    <citation type="journal article" date="2007" name="Genome Biol.">
        <title>Characterization and modeling of the Haemophilus influenzae core and supragenomes based on the complete genomic sequences of Rd and 12 clinical nontypeable strains.</title>
        <authorList>
            <person name="Hogg J.S."/>
            <person name="Hu F.Z."/>
            <person name="Janto B."/>
            <person name="Boissy R."/>
            <person name="Hayes J."/>
            <person name="Keefe R."/>
            <person name="Post J.C."/>
            <person name="Ehrlich G.D."/>
        </authorList>
    </citation>
    <scope>NUCLEOTIDE SEQUENCE [LARGE SCALE GENOMIC DNA]</scope>
    <source>
        <strain>PittGG</strain>
    </source>
</reference>
<comment type="function">
    <text evidence="1">Exhibits a very high intrinsic GTPase hydrolysis rate. Involved in the addition of a carboxymethylaminomethyl (cmnm) group at the wobble position (U34) of certain tRNAs, forming tRNA-cmnm(5)s(2)U34.</text>
</comment>
<comment type="cofactor">
    <cofactor evidence="1">
        <name>K(+)</name>
        <dbReference type="ChEBI" id="CHEBI:29103"/>
    </cofactor>
    <text evidence="1">Binds 1 potassium ion per subunit.</text>
</comment>
<comment type="subunit">
    <text evidence="1">Homodimer. Heterotetramer of two MnmE and two MnmG subunits.</text>
</comment>
<comment type="subcellular location">
    <subcellularLocation>
        <location evidence="1">Cytoplasm</location>
    </subcellularLocation>
</comment>
<comment type="similarity">
    <text evidence="1">Belongs to the TRAFAC class TrmE-Era-EngA-EngB-Septin-like GTPase superfamily. TrmE GTPase family.</text>
</comment>
<dbReference type="EC" id="3.6.-.-" evidence="1"/>
<dbReference type="EMBL" id="CP000672">
    <property type="protein sequence ID" value="ABR00541.1"/>
    <property type="molecule type" value="Genomic_DNA"/>
</dbReference>
<dbReference type="SMR" id="A5UID5"/>
<dbReference type="KEGG" id="hiq:CGSHiGG_08615"/>
<dbReference type="HOGENOM" id="CLU_019624_4_1_6"/>
<dbReference type="Proteomes" id="UP000001990">
    <property type="component" value="Chromosome"/>
</dbReference>
<dbReference type="GO" id="GO:0005829">
    <property type="term" value="C:cytosol"/>
    <property type="evidence" value="ECO:0007669"/>
    <property type="project" value="TreeGrafter"/>
</dbReference>
<dbReference type="GO" id="GO:0005525">
    <property type="term" value="F:GTP binding"/>
    <property type="evidence" value="ECO:0007669"/>
    <property type="project" value="UniProtKB-UniRule"/>
</dbReference>
<dbReference type="GO" id="GO:0003924">
    <property type="term" value="F:GTPase activity"/>
    <property type="evidence" value="ECO:0007669"/>
    <property type="project" value="UniProtKB-UniRule"/>
</dbReference>
<dbReference type="GO" id="GO:0046872">
    <property type="term" value="F:metal ion binding"/>
    <property type="evidence" value="ECO:0007669"/>
    <property type="project" value="UniProtKB-KW"/>
</dbReference>
<dbReference type="GO" id="GO:0030488">
    <property type="term" value="P:tRNA methylation"/>
    <property type="evidence" value="ECO:0007669"/>
    <property type="project" value="TreeGrafter"/>
</dbReference>
<dbReference type="GO" id="GO:0002098">
    <property type="term" value="P:tRNA wobble uridine modification"/>
    <property type="evidence" value="ECO:0007669"/>
    <property type="project" value="TreeGrafter"/>
</dbReference>
<dbReference type="CDD" id="cd04164">
    <property type="entry name" value="trmE"/>
    <property type="match status" value="1"/>
</dbReference>
<dbReference type="CDD" id="cd14858">
    <property type="entry name" value="TrmE_N"/>
    <property type="match status" value="1"/>
</dbReference>
<dbReference type="FunFam" id="3.30.1360.120:FF:000001">
    <property type="entry name" value="tRNA modification GTPase MnmE"/>
    <property type="match status" value="1"/>
</dbReference>
<dbReference type="FunFam" id="3.40.50.300:FF:000249">
    <property type="entry name" value="tRNA modification GTPase MnmE"/>
    <property type="match status" value="1"/>
</dbReference>
<dbReference type="Gene3D" id="3.40.50.300">
    <property type="entry name" value="P-loop containing nucleotide triphosphate hydrolases"/>
    <property type="match status" value="1"/>
</dbReference>
<dbReference type="Gene3D" id="3.30.1360.120">
    <property type="entry name" value="Probable tRNA modification gtpase trme, domain 1"/>
    <property type="match status" value="1"/>
</dbReference>
<dbReference type="Gene3D" id="1.20.120.430">
    <property type="entry name" value="tRNA modification GTPase MnmE domain 2"/>
    <property type="match status" value="1"/>
</dbReference>
<dbReference type="HAMAP" id="MF_00379">
    <property type="entry name" value="GTPase_MnmE"/>
    <property type="match status" value="1"/>
</dbReference>
<dbReference type="InterPro" id="IPR031168">
    <property type="entry name" value="G_TrmE"/>
</dbReference>
<dbReference type="InterPro" id="IPR006073">
    <property type="entry name" value="GTP-bd"/>
</dbReference>
<dbReference type="InterPro" id="IPR018948">
    <property type="entry name" value="GTP-bd_TrmE_N"/>
</dbReference>
<dbReference type="InterPro" id="IPR004520">
    <property type="entry name" value="GTPase_MnmE"/>
</dbReference>
<dbReference type="InterPro" id="IPR027368">
    <property type="entry name" value="MnmE_dom2"/>
</dbReference>
<dbReference type="InterPro" id="IPR025867">
    <property type="entry name" value="MnmE_helical"/>
</dbReference>
<dbReference type="InterPro" id="IPR027417">
    <property type="entry name" value="P-loop_NTPase"/>
</dbReference>
<dbReference type="InterPro" id="IPR005225">
    <property type="entry name" value="Small_GTP-bd"/>
</dbReference>
<dbReference type="InterPro" id="IPR027266">
    <property type="entry name" value="TrmE/GcvT_dom1"/>
</dbReference>
<dbReference type="NCBIfam" id="TIGR00450">
    <property type="entry name" value="mnmE_trmE_thdF"/>
    <property type="match status" value="1"/>
</dbReference>
<dbReference type="NCBIfam" id="NF003661">
    <property type="entry name" value="PRK05291.1-3"/>
    <property type="match status" value="1"/>
</dbReference>
<dbReference type="NCBIfam" id="TIGR00231">
    <property type="entry name" value="small_GTP"/>
    <property type="match status" value="1"/>
</dbReference>
<dbReference type="PANTHER" id="PTHR42714">
    <property type="entry name" value="TRNA MODIFICATION GTPASE GTPBP3"/>
    <property type="match status" value="1"/>
</dbReference>
<dbReference type="PANTHER" id="PTHR42714:SF2">
    <property type="entry name" value="TRNA MODIFICATION GTPASE GTPBP3, MITOCHONDRIAL"/>
    <property type="match status" value="1"/>
</dbReference>
<dbReference type="Pfam" id="PF01926">
    <property type="entry name" value="MMR_HSR1"/>
    <property type="match status" value="1"/>
</dbReference>
<dbReference type="Pfam" id="PF12631">
    <property type="entry name" value="MnmE_helical"/>
    <property type="match status" value="1"/>
</dbReference>
<dbReference type="Pfam" id="PF10396">
    <property type="entry name" value="TrmE_N"/>
    <property type="match status" value="1"/>
</dbReference>
<dbReference type="SUPFAM" id="SSF52540">
    <property type="entry name" value="P-loop containing nucleoside triphosphate hydrolases"/>
    <property type="match status" value="1"/>
</dbReference>
<dbReference type="SUPFAM" id="SSF116878">
    <property type="entry name" value="TrmE connector domain"/>
    <property type="match status" value="1"/>
</dbReference>
<dbReference type="PROSITE" id="PS51709">
    <property type="entry name" value="G_TRME"/>
    <property type="match status" value="1"/>
</dbReference>
<accession>A5UID5</accession>
<name>MNME_HAEIG</name>
<protein>
    <recommendedName>
        <fullName evidence="1">tRNA modification GTPase MnmE</fullName>
        <ecNumber evidence="1">3.6.-.-</ecNumber>
    </recommendedName>
</protein>
<evidence type="ECO:0000255" key="1">
    <source>
        <dbReference type="HAMAP-Rule" id="MF_00379"/>
    </source>
</evidence>
<proteinExistence type="inferred from homology"/>
<gene>
    <name evidence="1" type="primary">mnmE</name>
    <name evidence="1" type="synonym">trmE</name>
    <name type="ordered locus">CGSHiGG_08615</name>
</gene>
<keyword id="KW-0963">Cytoplasm</keyword>
<keyword id="KW-0342">GTP-binding</keyword>
<keyword id="KW-0378">Hydrolase</keyword>
<keyword id="KW-0460">Magnesium</keyword>
<keyword id="KW-0479">Metal-binding</keyword>
<keyword id="KW-0547">Nucleotide-binding</keyword>
<keyword id="KW-0630">Potassium</keyword>
<keyword id="KW-0819">tRNA processing</keyword>